<organism>
    <name type="scientific">Roseiflexus castenholzii (strain DSM 13941 / HLO8)</name>
    <dbReference type="NCBI Taxonomy" id="383372"/>
    <lineage>
        <taxon>Bacteria</taxon>
        <taxon>Bacillati</taxon>
        <taxon>Chloroflexota</taxon>
        <taxon>Chloroflexia</taxon>
        <taxon>Chloroflexales</taxon>
        <taxon>Roseiflexineae</taxon>
        <taxon>Roseiflexaceae</taxon>
        <taxon>Roseiflexus</taxon>
    </lineage>
</organism>
<accession>A7NPZ0</accession>
<reference key="1">
    <citation type="submission" date="2007-08" db="EMBL/GenBank/DDBJ databases">
        <title>Complete sequence of Roseiflexus castenholzii DSM 13941.</title>
        <authorList>
            <consortium name="US DOE Joint Genome Institute"/>
            <person name="Copeland A."/>
            <person name="Lucas S."/>
            <person name="Lapidus A."/>
            <person name="Barry K."/>
            <person name="Glavina del Rio T."/>
            <person name="Dalin E."/>
            <person name="Tice H."/>
            <person name="Pitluck S."/>
            <person name="Thompson L.S."/>
            <person name="Brettin T."/>
            <person name="Bruce D."/>
            <person name="Detter J.C."/>
            <person name="Han C."/>
            <person name="Tapia R."/>
            <person name="Schmutz J."/>
            <person name="Larimer F."/>
            <person name="Land M."/>
            <person name="Hauser L."/>
            <person name="Kyrpides N."/>
            <person name="Mikhailova N."/>
            <person name="Bryant D.A."/>
            <person name="Hanada S."/>
            <person name="Tsukatani Y."/>
            <person name="Richardson P."/>
        </authorList>
    </citation>
    <scope>NUCLEOTIDE SEQUENCE [LARGE SCALE GENOMIC DNA]</scope>
    <source>
        <strain>DSM 13941 / HLO8</strain>
    </source>
</reference>
<protein>
    <recommendedName>
        <fullName evidence="1">Small ribosomal subunit protein uS15</fullName>
    </recommendedName>
    <alternativeName>
        <fullName evidence="2">30S ribosomal protein S15</fullName>
    </alternativeName>
</protein>
<name>RS15_ROSCS</name>
<gene>
    <name evidence="1" type="primary">rpsO</name>
    <name type="ordered locus">Rcas_3587</name>
</gene>
<dbReference type="EMBL" id="CP000804">
    <property type="protein sequence ID" value="ABU59636.1"/>
    <property type="molecule type" value="Genomic_DNA"/>
</dbReference>
<dbReference type="RefSeq" id="WP_012122059.1">
    <property type="nucleotide sequence ID" value="NC_009767.1"/>
</dbReference>
<dbReference type="SMR" id="A7NPZ0"/>
<dbReference type="STRING" id="383372.Rcas_3587"/>
<dbReference type="KEGG" id="rca:Rcas_3587"/>
<dbReference type="eggNOG" id="COG0184">
    <property type="taxonomic scope" value="Bacteria"/>
</dbReference>
<dbReference type="HOGENOM" id="CLU_148518_0_0_0"/>
<dbReference type="OrthoDB" id="9799262at2"/>
<dbReference type="Proteomes" id="UP000000263">
    <property type="component" value="Chromosome"/>
</dbReference>
<dbReference type="GO" id="GO:0022627">
    <property type="term" value="C:cytosolic small ribosomal subunit"/>
    <property type="evidence" value="ECO:0007669"/>
    <property type="project" value="TreeGrafter"/>
</dbReference>
<dbReference type="GO" id="GO:0019843">
    <property type="term" value="F:rRNA binding"/>
    <property type="evidence" value="ECO:0007669"/>
    <property type="project" value="UniProtKB-UniRule"/>
</dbReference>
<dbReference type="GO" id="GO:0003735">
    <property type="term" value="F:structural constituent of ribosome"/>
    <property type="evidence" value="ECO:0007669"/>
    <property type="project" value="InterPro"/>
</dbReference>
<dbReference type="GO" id="GO:0006412">
    <property type="term" value="P:translation"/>
    <property type="evidence" value="ECO:0007669"/>
    <property type="project" value="UniProtKB-UniRule"/>
</dbReference>
<dbReference type="CDD" id="cd00353">
    <property type="entry name" value="Ribosomal_S15p_S13e"/>
    <property type="match status" value="1"/>
</dbReference>
<dbReference type="FunFam" id="1.10.287.10:FF:000002">
    <property type="entry name" value="30S ribosomal protein S15"/>
    <property type="match status" value="1"/>
</dbReference>
<dbReference type="Gene3D" id="6.10.250.3130">
    <property type="match status" value="1"/>
</dbReference>
<dbReference type="Gene3D" id="1.10.287.10">
    <property type="entry name" value="S15/NS1, RNA-binding"/>
    <property type="match status" value="1"/>
</dbReference>
<dbReference type="HAMAP" id="MF_01343_B">
    <property type="entry name" value="Ribosomal_uS15_B"/>
    <property type="match status" value="1"/>
</dbReference>
<dbReference type="InterPro" id="IPR000589">
    <property type="entry name" value="Ribosomal_uS15"/>
</dbReference>
<dbReference type="InterPro" id="IPR005290">
    <property type="entry name" value="Ribosomal_uS15_bac-type"/>
</dbReference>
<dbReference type="InterPro" id="IPR009068">
    <property type="entry name" value="uS15_NS1_RNA-bd_sf"/>
</dbReference>
<dbReference type="NCBIfam" id="TIGR00952">
    <property type="entry name" value="S15_bact"/>
    <property type="match status" value="1"/>
</dbReference>
<dbReference type="PANTHER" id="PTHR23321">
    <property type="entry name" value="RIBOSOMAL PROTEIN S15, BACTERIAL AND ORGANELLAR"/>
    <property type="match status" value="1"/>
</dbReference>
<dbReference type="PANTHER" id="PTHR23321:SF26">
    <property type="entry name" value="SMALL RIBOSOMAL SUBUNIT PROTEIN US15M"/>
    <property type="match status" value="1"/>
</dbReference>
<dbReference type="Pfam" id="PF00312">
    <property type="entry name" value="Ribosomal_S15"/>
    <property type="match status" value="1"/>
</dbReference>
<dbReference type="SMART" id="SM01387">
    <property type="entry name" value="Ribosomal_S15"/>
    <property type="match status" value="1"/>
</dbReference>
<dbReference type="SUPFAM" id="SSF47060">
    <property type="entry name" value="S15/NS1 RNA-binding domain"/>
    <property type="match status" value="1"/>
</dbReference>
<dbReference type="PROSITE" id="PS00362">
    <property type="entry name" value="RIBOSOMAL_S15"/>
    <property type="match status" value="1"/>
</dbReference>
<comment type="function">
    <text evidence="1">One of the primary rRNA binding proteins, it binds directly to 16S rRNA where it helps nucleate assembly of the platform of the 30S subunit by binding and bridging several RNA helices of the 16S rRNA.</text>
</comment>
<comment type="function">
    <text evidence="1">Forms an intersubunit bridge (bridge B4) with the 23S rRNA of the 50S subunit in the ribosome.</text>
</comment>
<comment type="subunit">
    <text evidence="1">Part of the 30S ribosomal subunit. Forms a bridge to the 50S subunit in the 70S ribosome, contacting the 23S rRNA.</text>
</comment>
<comment type="similarity">
    <text evidence="1">Belongs to the universal ribosomal protein uS15 family.</text>
</comment>
<evidence type="ECO:0000255" key="1">
    <source>
        <dbReference type="HAMAP-Rule" id="MF_01343"/>
    </source>
</evidence>
<evidence type="ECO:0000305" key="2"/>
<feature type="chain" id="PRO_1000086815" description="Small ribosomal subunit protein uS15">
    <location>
        <begin position="1"/>
        <end position="89"/>
    </location>
</feature>
<sequence length="89" mass="10234">MALEKDEKTAIITDYQIHSSDTGSPQVQVALLTERINGLIEHLKVHPHDHHSRRGLLKLVGRRRRLLAYLASKDKDAYRKLIDSLGLRR</sequence>
<proteinExistence type="inferred from homology"/>
<keyword id="KW-1185">Reference proteome</keyword>
<keyword id="KW-0687">Ribonucleoprotein</keyword>
<keyword id="KW-0689">Ribosomal protein</keyword>
<keyword id="KW-0694">RNA-binding</keyword>
<keyword id="KW-0699">rRNA-binding</keyword>